<evidence type="ECO:0000255" key="1">
    <source>
        <dbReference type="HAMAP-Rule" id="MF_01218"/>
    </source>
</evidence>
<organism>
    <name type="scientific">Sodalis glossinidius (strain morsitans)</name>
    <dbReference type="NCBI Taxonomy" id="343509"/>
    <lineage>
        <taxon>Bacteria</taxon>
        <taxon>Pseudomonadati</taxon>
        <taxon>Pseudomonadota</taxon>
        <taxon>Gammaproteobacteria</taxon>
        <taxon>Enterobacterales</taxon>
        <taxon>Bruguierivoracaceae</taxon>
        <taxon>Sodalis</taxon>
    </lineage>
</organism>
<reference key="1">
    <citation type="journal article" date="2006" name="Genome Res.">
        <title>Massive genome erosion and functional adaptations provide insights into the symbiotic lifestyle of Sodalis glossinidius in the tsetse host.</title>
        <authorList>
            <person name="Toh H."/>
            <person name="Weiss B.L."/>
            <person name="Perkin S.A.H."/>
            <person name="Yamashita A."/>
            <person name="Oshima K."/>
            <person name="Hattori M."/>
            <person name="Aksoy S."/>
        </authorList>
    </citation>
    <scope>NUCLEOTIDE SEQUENCE [LARGE SCALE GENOMIC DNA]</scope>
    <source>
        <strain>morsitans</strain>
    </source>
</reference>
<protein>
    <recommendedName>
        <fullName evidence="1">Uracil phosphoribosyltransferase</fullName>
        <ecNumber evidence="1">2.4.2.9</ecNumber>
    </recommendedName>
    <alternativeName>
        <fullName evidence="1">UMP pyrophosphorylase</fullName>
    </alternativeName>
    <alternativeName>
        <fullName evidence="1">UPRTase</fullName>
    </alternativeName>
</protein>
<dbReference type="EC" id="2.4.2.9" evidence="1"/>
<dbReference type="EMBL" id="AP008232">
    <property type="protein sequence ID" value="BAE75006.1"/>
    <property type="molecule type" value="Genomic_DNA"/>
</dbReference>
<dbReference type="RefSeq" id="WP_011411555.1">
    <property type="nucleotide sequence ID" value="NZ_LN854557.1"/>
</dbReference>
<dbReference type="SMR" id="Q2NS69"/>
<dbReference type="STRING" id="343509.SG1731"/>
<dbReference type="KEGG" id="sgl:SG1731"/>
<dbReference type="eggNOG" id="COG0035">
    <property type="taxonomic scope" value="Bacteria"/>
</dbReference>
<dbReference type="HOGENOM" id="CLU_067096_2_2_6"/>
<dbReference type="OrthoDB" id="9781675at2"/>
<dbReference type="BioCyc" id="SGLO343509:SGP1_RS15690-MONOMER"/>
<dbReference type="UniPathway" id="UPA00574">
    <property type="reaction ID" value="UER00636"/>
</dbReference>
<dbReference type="Proteomes" id="UP000001932">
    <property type="component" value="Chromosome"/>
</dbReference>
<dbReference type="GO" id="GO:0005525">
    <property type="term" value="F:GTP binding"/>
    <property type="evidence" value="ECO:0007669"/>
    <property type="project" value="UniProtKB-KW"/>
</dbReference>
<dbReference type="GO" id="GO:0000287">
    <property type="term" value="F:magnesium ion binding"/>
    <property type="evidence" value="ECO:0007669"/>
    <property type="project" value="UniProtKB-UniRule"/>
</dbReference>
<dbReference type="GO" id="GO:0004845">
    <property type="term" value="F:uracil phosphoribosyltransferase activity"/>
    <property type="evidence" value="ECO:0007669"/>
    <property type="project" value="UniProtKB-UniRule"/>
</dbReference>
<dbReference type="GO" id="GO:0044206">
    <property type="term" value="P:UMP salvage"/>
    <property type="evidence" value="ECO:0007669"/>
    <property type="project" value="UniProtKB-UniRule"/>
</dbReference>
<dbReference type="GO" id="GO:0006223">
    <property type="term" value="P:uracil salvage"/>
    <property type="evidence" value="ECO:0007669"/>
    <property type="project" value="InterPro"/>
</dbReference>
<dbReference type="CDD" id="cd06223">
    <property type="entry name" value="PRTases_typeI"/>
    <property type="match status" value="1"/>
</dbReference>
<dbReference type="FunFam" id="3.40.50.2020:FF:000003">
    <property type="entry name" value="Uracil phosphoribosyltransferase"/>
    <property type="match status" value="1"/>
</dbReference>
<dbReference type="Gene3D" id="3.40.50.2020">
    <property type="match status" value="1"/>
</dbReference>
<dbReference type="HAMAP" id="MF_01218_B">
    <property type="entry name" value="Upp_B"/>
    <property type="match status" value="1"/>
</dbReference>
<dbReference type="InterPro" id="IPR000836">
    <property type="entry name" value="PRibTrfase_dom"/>
</dbReference>
<dbReference type="InterPro" id="IPR029057">
    <property type="entry name" value="PRTase-like"/>
</dbReference>
<dbReference type="InterPro" id="IPR034332">
    <property type="entry name" value="Upp_B"/>
</dbReference>
<dbReference type="InterPro" id="IPR050054">
    <property type="entry name" value="UPRTase/APRTase"/>
</dbReference>
<dbReference type="InterPro" id="IPR005765">
    <property type="entry name" value="Ura_phspho_trans"/>
</dbReference>
<dbReference type="NCBIfam" id="NF001097">
    <property type="entry name" value="PRK00129.1"/>
    <property type="match status" value="1"/>
</dbReference>
<dbReference type="NCBIfam" id="TIGR01091">
    <property type="entry name" value="upp"/>
    <property type="match status" value="1"/>
</dbReference>
<dbReference type="PANTHER" id="PTHR32315">
    <property type="entry name" value="ADENINE PHOSPHORIBOSYLTRANSFERASE"/>
    <property type="match status" value="1"/>
</dbReference>
<dbReference type="PANTHER" id="PTHR32315:SF4">
    <property type="entry name" value="URACIL PHOSPHORIBOSYLTRANSFERASE, CHLOROPLASTIC"/>
    <property type="match status" value="1"/>
</dbReference>
<dbReference type="Pfam" id="PF14681">
    <property type="entry name" value="UPRTase"/>
    <property type="match status" value="1"/>
</dbReference>
<dbReference type="SUPFAM" id="SSF53271">
    <property type="entry name" value="PRTase-like"/>
    <property type="match status" value="1"/>
</dbReference>
<name>UPP_SODGM</name>
<sequence length="208" mass="22420">MKIVEVKHPLVKHKLGLMRAHDISTKRFRELASEVGSLLTYVATADMETEKVTIEGWCGPVEIDQIKGKKITVVPILRAGLGMMDGVLENLPSARISVVGVYRDENTLTPVPYFHKLVSSIDERMALVVDPMLATGGSMIATIDLLKKAGCPCIKVLVLVAAPEGIAALEKAHPDVELYTAAIDKGLNEKGYIMPGLGDAGDKIFGTK</sequence>
<accession>Q2NS69</accession>
<comment type="function">
    <text evidence="1">Catalyzes the conversion of uracil and 5-phospho-alpha-D-ribose 1-diphosphate (PRPP) to UMP and diphosphate.</text>
</comment>
<comment type="catalytic activity">
    <reaction evidence="1">
        <text>UMP + diphosphate = 5-phospho-alpha-D-ribose 1-diphosphate + uracil</text>
        <dbReference type="Rhea" id="RHEA:13017"/>
        <dbReference type="ChEBI" id="CHEBI:17568"/>
        <dbReference type="ChEBI" id="CHEBI:33019"/>
        <dbReference type="ChEBI" id="CHEBI:57865"/>
        <dbReference type="ChEBI" id="CHEBI:58017"/>
        <dbReference type="EC" id="2.4.2.9"/>
    </reaction>
</comment>
<comment type="cofactor">
    <cofactor evidence="1">
        <name>Mg(2+)</name>
        <dbReference type="ChEBI" id="CHEBI:18420"/>
    </cofactor>
    <text evidence="1">Binds 1 Mg(2+) ion per subunit. The magnesium is bound as Mg-PRPP.</text>
</comment>
<comment type="activity regulation">
    <text evidence="1">Allosterically activated by GTP.</text>
</comment>
<comment type="pathway">
    <text evidence="1">Pyrimidine metabolism; UMP biosynthesis via salvage pathway; UMP from uracil: step 1/1.</text>
</comment>
<comment type="similarity">
    <text evidence="1">Belongs to the UPRTase family.</text>
</comment>
<keyword id="KW-0021">Allosteric enzyme</keyword>
<keyword id="KW-0328">Glycosyltransferase</keyword>
<keyword id="KW-0342">GTP-binding</keyword>
<keyword id="KW-0460">Magnesium</keyword>
<keyword id="KW-0547">Nucleotide-binding</keyword>
<keyword id="KW-0808">Transferase</keyword>
<proteinExistence type="inferred from homology"/>
<feature type="chain" id="PRO_1000053789" description="Uracil phosphoribosyltransferase">
    <location>
        <begin position="1"/>
        <end position="208"/>
    </location>
</feature>
<feature type="binding site" evidence="1">
    <location>
        <position position="78"/>
    </location>
    <ligand>
        <name>5-phospho-alpha-D-ribose 1-diphosphate</name>
        <dbReference type="ChEBI" id="CHEBI:58017"/>
    </ligand>
</feature>
<feature type="binding site" evidence="1">
    <location>
        <position position="103"/>
    </location>
    <ligand>
        <name>5-phospho-alpha-D-ribose 1-diphosphate</name>
        <dbReference type="ChEBI" id="CHEBI:58017"/>
    </ligand>
</feature>
<feature type="binding site" evidence="1">
    <location>
        <begin position="130"/>
        <end position="138"/>
    </location>
    <ligand>
        <name>5-phospho-alpha-D-ribose 1-diphosphate</name>
        <dbReference type="ChEBI" id="CHEBI:58017"/>
    </ligand>
</feature>
<feature type="binding site" evidence="1">
    <location>
        <position position="193"/>
    </location>
    <ligand>
        <name>uracil</name>
        <dbReference type="ChEBI" id="CHEBI:17568"/>
    </ligand>
</feature>
<feature type="binding site" evidence="1">
    <location>
        <begin position="198"/>
        <end position="200"/>
    </location>
    <ligand>
        <name>uracil</name>
        <dbReference type="ChEBI" id="CHEBI:17568"/>
    </ligand>
</feature>
<feature type="binding site" evidence="1">
    <location>
        <position position="199"/>
    </location>
    <ligand>
        <name>5-phospho-alpha-D-ribose 1-diphosphate</name>
        <dbReference type="ChEBI" id="CHEBI:58017"/>
    </ligand>
</feature>
<gene>
    <name evidence="1" type="primary">upp</name>
    <name type="ordered locus">SG1731</name>
</gene>